<proteinExistence type="inferred from homology"/>
<comment type="catalytic activity">
    <reaction evidence="1">
        <text>urea + 2 H2O + H(+) = hydrogencarbonate + 2 NH4(+)</text>
        <dbReference type="Rhea" id="RHEA:20557"/>
        <dbReference type="ChEBI" id="CHEBI:15377"/>
        <dbReference type="ChEBI" id="CHEBI:15378"/>
        <dbReference type="ChEBI" id="CHEBI:16199"/>
        <dbReference type="ChEBI" id="CHEBI:17544"/>
        <dbReference type="ChEBI" id="CHEBI:28938"/>
        <dbReference type="EC" id="3.5.1.5"/>
    </reaction>
</comment>
<comment type="pathway">
    <text evidence="1">Nitrogen metabolism; urea degradation; CO(2) and NH(3) from urea (urease route): step 1/1.</text>
</comment>
<comment type="subunit">
    <text evidence="1">Heterotrimer of UreA (gamma), UreB (beta) and UreC (alpha) subunits. Three heterotrimers associate to form the active enzyme.</text>
</comment>
<comment type="subcellular location">
    <subcellularLocation>
        <location evidence="1">Cytoplasm</location>
    </subcellularLocation>
</comment>
<comment type="similarity">
    <text evidence="1">Belongs to the urease gamma subunit family.</text>
</comment>
<evidence type="ECO:0000255" key="1">
    <source>
        <dbReference type="HAMAP-Rule" id="MF_00739"/>
    </source>
</evidence>
<sequence length="100" mass="11273">MHFTQREQDKLMIVVAAEVARRRKARGLKLNHPEALALISDELLEGARDGKTVAELMSYGRQILNKEDVMDGVEHMITDIEIEATFPDGTKLITVHHPIV</sequence>
<keyword id="KW-0963">Cytoplasm</keyword>
<keyword id="KW-0378">Hydrolase</keyword>
<accession>P67719</accession>
<accession>Q99RY4</accession>
<reference key="1">
    <citation type="journal article" date="2001" name="Lancet">
        <title>Whole genome sequencing of meticillin-resistant Staphylococcus aureus.</title>
        <authorList>
            <person name="Kuroda M."/>
            <person name="Ohta T."/>
            <person name="Uchiyama I."/>
            <person name="Baba T."/>
            <person name="Yuzawa H."/>
            <person name="Kobayashi I."/>
            <person name="Cui L."/>
            <person name="Oguchi A."/>
            <person name="Aoki K."/>
            <person name="Nagai Y."/>
            <person name="Lian J.-Q."/>
            <person name="Ito T."/>
            <person name="Kanamori M."/>
            <person name="Matsumaru H."/>
            <person name="Maruyama A."/>
            <person name="Murakami H."/>
            <person name="Hosoyama A."/>
            <person name="Mizutani-Ui Y."/>
            <person name="Takahashi N.K."/>
            <person name="Sawano T."/>
            <person name="Inoue R."/>
            <person name="Kaito C."/>
            <person name="Sekimizu K."/>
            <person name="Hirakawa H."/>
            <person name="Kuhara S."/>
            <person name="Goto S."/>
            <person name="Yabuzaki J."/>
            <person name="Kanehisa M."/>
            <person name="Yamashita A."/>
            <person name="Oshima K."/>
            <person name="Furuya K."/>
            <person name="Yoshino C."/>
            <person name="Shiba T."/>
            <person name="Hattori M."/>
            <person name="Ogasawara N."/>
            <person name="Hayashi H."/>
            <person name="Hiramatsu K."/>
        </authorList>
    </citation>
    <scope>NUCLEOTIDE SEQUENCE [LARGE SCALE GENOMIC DNA]</scope>
    <source>
        <strain>N315</strain>
    </source>
</reference>
<protein>
    <recommendedName>
        <fullName evidence="1">Urease subunit gamma</fullName>
        <ecNumber evidence="1">3.5.1.5</ecNumber>
    </recommendedName>
    <alternativeName>
        <fullName evidence="1">Urea amidohydrolase subunit gamma</fullName>
    </alternativeName>
</protein>
<feature type="chain" id="PRO_0000098040" description="Urease subunit gamma">
    <location>
        <begin position="1"/>
        <end position="100"/>
    </location>
</feature>
<gene>
    <name evidence="1" type="primary">ureA</name>
    <name type="ordered locus">SA2082</name>
</gene>
<dbReference type="EC" id="3.5.1.5" evidence="1"/>
<dbReference type="EMBL" id="BA000018">
    <property type="protein sequence ID" value="BAB43380.1"/>
    <property type="molecule type" value="Genomic_DNA"/>
</dbReference>
<dbReference type="PIR" id="C90027">
    <property type="entry name" value="C90027"/>
</dbReference>
<dbReference type="RefSeq" id="WP_000545928.1">
    <property type="nucleotide sequence ID" value="NC_002745.2"/>
</dbReference>
<dbReference type="SMR" id="P67719"/>
<dbReference type="EnsemblBacteria" id="BAB43380">
    <property type="protein sequence ID" value="BAB43380"/>
    <property type="gene ID" value="BAB43380"/>
</dbReference>
<dbReference type="KEGG" id="sau:SA2082"/>
<dbReference type="HOGENOM" id="CLU_145825_1_0_9"/>
<dbReference type="UniPathway" id="UPA00258">
    <property type="reaction ID" value="UER00370"/>
</dbReference>
<dbReference type="GO" id="GO:0005737">
    <property type="term" value="C:cytoplasm"/>
    <property type="evidence" value="ECO:0007669"/>
    <property type="project" value="UniProtKB-SubCell"/>
</dbReference>
<dbReference type="GO" id="GO:0016151">
    <property type="term" value="F:nickel cation binding"/>
    <property type="evidence" value="ECO:0007669"/>
    <property type="project" value="InterPro"/>
</dbReference>
<dbReference type="GO" id="GO:0009039">
    <property type="term" value="F:urease activity"/>
    <property type="evidence" value="ECO:0007669"/>
    <property type="project" value="UniProtKB-UniRule"/>
</dbReference>
<dbReference type="GO" id="GO:0043419">
    <property type="term" value="P:urea catabolic process"/>
    <property type="evidence" value="ECO:0007669"/>
    <property type="project" value="UniProtKB-UniRule"/>
</dbReference>
<dbReference type="CDD" id="cd00390">
    <property type="entry name" value="Urease_gamma"/>
    <property type="match status" value="1"/>
</dbReference>
<dbReference type="Gene3D" id="3.30.280.10">
    <property type="entry name" value="Urease, gamma-like subunit"/>
    <property type="match status" value="1"/>
</dbReference>
<dbReference type="HAMAP" id="MF_00739">
    <property type="entry name" value="Urease_gamma"/>
    <property type="match status" value="1"/>
</dbReference>
<dbReference type="InterPro" id="IPR012010">
    <property type="entry name" value="Urease_gamma"/>
</dbReference>
<dbReference type="InterPro" id="IPR002026">
    <property type="entry name" value="Urease_gamma/gamma-beta_su"/>
</dbReference>
<dbReference type="InterPro" id="IPR036463">
    <property type="entry name" value="Urease_gamma_sf"/>
</dbReference>
<dbReference type="InterPro" id="IPR050069">
    <property type="entry name" value="Urease_subunit"/>
</dbReference>
<dbReference type="NCBIfam" id="NF009712">
    <property type="entry name" value="PRK13241.1"/>
    <property type="match status" value="1"/>
</dbReference>
<dbReference type="NCBIfam" id="TIGR00193">
    <property type="entry name" value="urease_gam"/>
    <property type="match status" value="1"/>
</dbReference>
<dbReference type="PANTHER" id="PTHR33569">
    <property type="entry name" value="UREASE"/>
    <property type="match status" value="1"/>
</dbReference>
<dbReference type="PANTHER" id="PTHR33569:SF1">
    <property type="entry name" value="UREASE"/>
    <property type="match status" value="1"/>
</dbReference>
<dbReference type="Pfam" id="PF00547">
    <property type="entry name" value="Urease_gamma"/>
    <property type="match status" value="1"/>
</dbReference>
<dbReference type="PIRSF" id="PIRSF001223">
    <property type="entry name" value="Urease_gamma"/>
    <property type="match status" value="1"/>
</dbReference>
<dbReference type="SUPFAM" id="SSF54111">
    <property type="entry name" value="Urease, gamma-subunit"/>
    <property type="match status" value="1"/>
</dbReference>
<organism>
    <name type="scientific">Staphylococcus aureus (strain N315)</name>
    <dbReference type="NCBI Taxonomy" id="158879"/>
    <lineage>
        <taxon>Bacteria</taxon>
        <taxon>Bacillati</taxon>
        <taxon>Bacillota</taxon>
        <taxon>Bacilli</taxon>
        <taxon>Bacillales</taxon>
        <taxon>Staphylococcaceae</taxon>
        <taxon>Staphylococcus</taxon>
    </lineage>
</organism>
<name>URE3_STAAN</name>